<sequence>MLKVLFHTMTLFGHLLSTPIYIVGDACGKDRDEYKNPPLRAFSFESQFLQIENAKFKTLPDQSLRYRQADTSLFATIPVTEMSGFLLSSRYLGAEVSWKSSKELQDTDLQAVGYFAFQDKSFYQYITLSVGAYTLALTNWQWSVLFSGMVDPENIEIGSGLYQVVLSSKYHASESLSVIMGVINEVGLHDKQAWPLLGFSYKPEDRLTLNCIYPVNFSAEYQCTPVCDLGVAYRLTRLRKKFPKNSLATSEGIFEYSGREIEGNIKLIFWPGQSLKMFGGYSVGNDISLANAHNEDEKIYKFGSSLFFGASANLHF</sequence>
<accession>O84010</accession>
<evidence type="ECO:0000305" key="1"/>
<keyword id="KW-1185">Reference proteome</keyword>
<protein>
    <recommendedName>
        <fullName>Uncharacterized protein CT_007</fullName>
    </recommendedName>
</protein>
<organism>
    <name type="scientific">Chlamydia trachomatis serovar D (strain ATCC VR-885 / DSM 19411 / UW-3/Cx)</name>
    <dbReference type="NCBI Taxonomy" id="272561"/>
    <lineage>
        <taxon>Bacteria</taxon>
        <taxon>Pseudomonadati</taxon>
        <taxon>Chlamydiota</taxon>
        <taxon>Chlamydiia</taxon>
        <taxon>Chlamydiales</taxon>
        <taxon>Chlamydiaceae</taxon>
        <taxon>Chlamydia/Chlamydophila group</taxon>
        <taxon>Chlamydia</taxon>
    </lineage>
</organism>
<feature type="chain" id="PRO_0000218381" description="Uncharacterized protein CT_007">
    <location>
        <begin position="1"/>
        <end position="316"/>
    </location>
</feature>
<comment type="similarity">
    <text evidence="1">Belongs to the chlamydial CPn_0441/CT_007/TC_0275 family.</text>
</comment>
<name>Y007_CHLTR</name>
<dbReference type="EMBL" id="AE001273">
    <property type="protein sequence ID" value="AAC67597.1"/>
    <property type="molecule type" value="Genomic_DNA"/>
</dbReference>
<dbReference type="PIR" id="B71569">
    <property type="entry name" value="B71569"/>
</dbReference>
<dbReference type="RefSeq" id="NP_219509.1">
    <property type="nucleotide sequence ID" value="NC_000117.1"/>
</dbReference>
<dbReference type="RefSeq" id="WP_010724979.1">
    <property type="nucleotide sequence ID" value="NC_000117.1"/>
</dbReference>
<dbReference type="STRING" id="272561.CT_007"/>
<dbReference type="EnsemblBacteria" id="AAC67597">
    <property type="protein sequence ID" value="AAC67597"/>
    <property type="gene ID" value="CT_007"/>
</dbReference>
<dbReference type="GeneID" id="884088"/>
<dbReference type="KEGG" id="ctr:CT_007"/>
<dbReference type="PATRIC" id="fig|272561.5.peg.9"/>
<dbReference type="HOGENOM" id="CLU_902237_0_0_0"/>
<dbReference type="InParanoid" id="O84010"/>
<dbReference type="OrthoDB" id="18429at2"/>
<dbReference type="Proteomes" id="UP000000431">
    <property type="component" value="Chromosome"/>
</dbReference>
<proteinExistence type="inferred from homology"/>
<gene>
    <name type="ordered locus">CT_007</name>
</gene>
<reference key="1">
    <citation type="journal article" date="1998" name="Science">
        <title>Genome sequence of an obligate intracellular pathogen of humans: Chlamydia trachomatis.</title>
        <authorList>
            <person name="Stephens R.S."/>
            <person name="Kalman S."/>
            <person name="Lammel C.J."/>
            <person name="Fan J."/>
            <person name="Marathe R."/>
            <person name="Aravind L."/>
            <person name="Mitchell W.P."/>
            <person name="Olinger L."/>
            <person name="Tatusov R.L."/>
            <person name="Zhao Q."/>
            <person name="Koonin E.V."/>
            <person name="Davis R.W."/>
        </authorList>
    </citation>
    <scope>NUCLEOTIDE SEQUENCE [LARGE SCALE GENOMIC DNA]</scope>
    <source>
        <strain>ATCC VR-885 / DSM 19411 / UW-3/Cx</strain>
    </source>
</reference>